<accession>A9BBV0</accession>
<dbReference type="EC" id="2.3.1.275" evidence="1"/>
<dbReference type="EMBL" id="CP000878">
    <property type="protein sequence ID" value="ABX09312.1"/>
    <property type="molecule type" value="Genomic_DNA"/>
</dbReference>
<dbReference type="RefSeq" id="WP_012195933.1">
    <property type="nucleotide sequence ID" value="NC_009976.1"/>
</dbReference>
<dbReference type="SMR" id="A9BBV0"/>
<dbReference type="STRING" id="93059.P9211_13811"/>
<dbReference type="KEGG" id="pmj:P9211_13811"/>
<dbReference type="eggNOG" id="COG0344">
    <property type="taxonomic scope" value="Bacteria"/>
</dbReference>
<dbReference type="HOGENOM" id="CLU_081254_7_1_3"/>
<dbReference type="OrthoDB" id="9777124at2"/>
<dbReference type="UniPathway" id="UPA00085"/>
<dbReference type="Proteomes" id="UP000000788">
    <property type="component" value="Chromosome"/>
</dbReference>
<dbReference type="GO" id="GO:0005886">
    <property type="term" value="C:plasma membrane"/>
    <property type="evidence" value="ECO:0007669"/>
    <property type="project" value="UniProtKB-SubCell"/>
</dbReference>
<dbReference type="GO" id="GO:0043772">
    <property type="term" value="F:acyl-phosphate glycerol-3-phosphate acyltransferase activity"/>
    <property type="evidence" value="ECO:0007669"/>
    <property type="project" value="UniProtKB-UniRule"/>
</dbReference>
<dbReference type="GO" id="GO:0008654">
    <property type="term" value="P:phospholipid biosynthetic process"/>
    <property type="evidence" value="ECO:0007669"/>
    <property type="project" value="UniProtKB-UniRule"/>
</dbReference>
<dbReference type="HAMAP" id="MF_01043">
    <property type="entry name" value="PlsY"/>
    <property type="match status" value="1"/>
</dbReference>
<dbReference type="InterPro" id="IPR003811">
    <property type="entry name" value="G3P_acylTferase_PlsY"/>
</dbReference>
<dbReference type="NCBIfam" id="TIGR00023">
    <property type="entry name" value="glycerol-3-phosphate 1-O-acyltransferase PlsY"/>
    <property type="match status" value="1"/>
</dbReference>
<dbReference type="PANTHER" id="PTHR30309:SF0">
    <property type="entry name" value="GLYCEROL-3-PHOSPHATE ACYLTRANSFERASE-RELATED"/>
    <property type="match status" value="1"/>
</dbReference>
<dbReference type="PANTHER" id="PTHR30309">
    <property type="entry name" value="INNER MEMBRANE PROTEIN YGIH"/>
    <property type="match status" value="1"/>
</dbReference>
<dbReference type="Pfam" id="PF02660">
    <property type="entry name" value="G3P_acyltransf"/>
    <property type="match status" value="1"/>
</dbReference>
<dbReference type="SMART" id="SM01207">
    <property type="entry name" value="G3P_acyltransf"/>
    <property type="match status" value="1"/>
</dbReference>
<sequence length="206" mass="21945">MELTKIFLAFLCIGVSYSLGSFPSGFIAGKWLKGIDLRKVGSGSTGATNVLRHVGKKAALIVFLIDVSKGIGSILIAKSLFLSPSFHVICGIAALSGHIWPIWLNWKGGKAVATGLGVFLGISWQVGLASLGIFMAVLSSSKIVSLSSISAAISLPILMFLSLQEASFLNAYIIASFAAMIMVLWRHRANLKRLLNGDEPRIGKIN</sequence>
<gene>
    <name evidence="1" type="primary">plsY</name>
    <name type="ordered locus">P9211_13811</name>
</gene>
<keyword id="KW-0997">Cell inner membrane</keyword>
<keyword id="KW-1003">Cell membrane</keyword>
<keyword id="KW-0444">Lipid biosynthesis</keyword>
<keyword id="KW-0443">Lipid metabolism</keyword>
<keyword id="KW-0472">Membrane</keyword>
<keyword id="KW-0594">Phospholipid biosynthesis</keyword>
<keyword id="KW-1208">Phospholipid metabolism</keyword>
<keyword id="KW-1185">Reference proteome</keyword>
<keyword id="KW-0808">Transferase</keyword>
<keyword id="KW-0812">Transmembrane</keyword>
<keyword id="KW-1133">Transmembrane helix</keyword>
<name>PLSY_PROM4</name>
<evidence type="ECO:0000255" key="1">
    <source>
        <dbReference type="HAMAP-Rule" id="MF_01043"/>
    </source>
</evidence>
<reference key="1">
    <citation type="journal article" date="2007" name="PLoS Genet.">
        <title>Patterns and implications of gene gain and loss in the evolution of Prochlorococcus.</title>
        <authorList>
            <person name="Kettler G.C."/>
            <person name="Martiny A.C."/>
            <person name="Huang K."/>
            <person name="Zucker J."/>
            <person name="Coleman M.L."/>
            <person name="Rodrigue S."/>
            <person name="Chen F."/>
            <person name="Lapidus A."/>
            <person name="Ferriera S."/>
            <person name="Johnson J."/>
            <person name="Steglich C."/>
            <person name="Church G.M."/>
            <person name="Richardson P."/>
            <person name="Chisholm S.W."/>
        </authorList>
    </citation>
    <scope>NUCLEOTIDE SEQUENCE [LARGE SCALE GENOMIC DNA]</scope>
    <source>
        <strain>MIT 9211</strain>
    </source>
</reference>
<feature type="chain" id="PRO_1000136107" description="Glycerol-3-phosphate acyltransferase">
    <location>
        <begin position="1"/>
        <end position="206"/>
    </location>
</feature>
<feature type="transmembrane region" description="Helical" evidence="1">
    <location>
        <begin position="6"/>
        <end position="26"/>
    </location>
</feature>
<feature type="transmembrane region" description="Helical" evidence="1">
    <location>
        <begin position="57"/>
        <end position="77"/>
    </location>
</feature>
<feature type="transmembrane region" description="Helical" evidence="1">
    <location>
        <begin position="86"/>
        <end position="106"/>
    </location>
</feature>
<feature type="transmembrane region" description="Helical" evidence="1">
    <location>
        <begin position="118"/>
        <end position="138"/>
    </location>
</feature>
<feature type="transmembrane region" description="Helical" evidence="1">
    <location>
        <begin position="143"/>
        <end position="163"/>
    </location>
</feature>
<feature type="transmembrane region" description="Helical" evidence="1">
    <location>
        <begin position="165"/>
        <end position="185"/>
    </location>
</feature>
<organism>
    <name type="scientific">Prochlorococcus marinus (strain MIT 9211)</name>
    <dbReference type="NCBI Taxonomy" id="93059"/>
    <lineage>
        <taxon>Bacteria</taxon>
        <taxon>Bacillati</taxon>
        <taxon>Cyanobacteriota</taxon>
        <taxon>Cyanophyceae</taxon>
        <taxon>Synechococcales</taxon>
        <taxon>Prochlorococcaceae</taxon>
        <taxon>Prochlorococcus</taxon>
    </lineage>
</organism>
<proteinExistence type="inferred from homology"/>
<protein>
    <recommendedName>
        <fullName evidence="1">Glycerol-3-phosphate acyltransferase</fullName>
    </recommendedName>
    <alternativeName>
        <fullName evidence="1">Acyl-PO4 G3P acyltransferase</fullName>
    </alternativeName>
    <alternativeName>
        <fullName evidence="1">Acyl-phosphate--glycerol-3-phosphate acyltransferase</fullName>
    </alternativeName>
    <alternativeName>
        <fullName evidence="1">G3P acyltransferase</fullName>
        <shortName evidence="1">GPAT</shortName>
        <ecNumber evidence="1">2.3.1.275</ecNumber>
    </alternativeName>
    <alternativeName>
        <fullName evidence="1">Lysophosphatidic acid synthase</fullName>
        <shortName evidence="1">LPA synthase</shortName>
    </alternativeName>
</protein>
<comment type="function">
    <text evidence="1">Catalyzes the transfer of an acyl group from acyl-phosphate (acyl-PO(4)) to glycerol-3-phosphate (G3P) to form lysophosphatidic acid (LPA). This enzyme utilizes acyl-phosphate as fatty acyl donor, but not acyl-CoA or acyl-ACP.</text>
</comment>
<comment type="catalytic activity">
    <reaction evidence="1">
        <text>an acyl phosphate + sn-glycerol 3-phosphate = a 1-acyl-sn-glycero-3-phosphate + phosphate</text>
        <dbReference type="Rhea" id="RHEA:34075"/>
        <dbReference type="ChEBI" id="CHEBI:43474"/>
        <dbReference type="ChEBI" id="CHEBI:57597"/>
        <dbReference type="ChEBI" id="CHEBI:57970"/>
        <dbReference type="ChEBI" id="CHEBI:59918"/>
        <dbReference type="EC" id="2.3.1.275"/>
    </reaction>
</comment>
<comment type="pathway">
    <text evidence="1">Lipid metabolism; phospholipid metabolism.</text>
</comment>
<comment type="subunit">
    <text evidence="1">Probably interacts with PlsX.</text>
</comment>
<comment type="subcellular location">
    <subcellularLocation>
        <location evidence="1">Cell inner membrane</location>
        <topology evidence="1">Multi-pass membrane protein</topology>
    </subcellularLocation>
</comment>
<comment type="similarity">
    <text evidence="1">Belongs to the PlsY family.</text>
</comment>